<organism>
    <name type="scientific">Leifsonia xyli subsp. xyli (strain CTCB07)</name>
    <dbReference type="NCBI Taxonomy" id="281090"/>
    <lineage>
        <taxon>Bacteria</taxon>
        <taxon>Bacillati</taxon>
        <taxon>Actinomycetota</taxon>
        <taxon>Actinomycetes</taxon>
        <taxon>Micrococcales</taxon>
        <taxon>Microbacteriaceae</taxon>
        <taxon>Leifsonia</taxon>
    </lineage>
</organism>
<protein>
    <recommendedName>
        <fullName evidence="1">Polyribonucleotide nucleotidyltransferase</fullName>
        <ecNumber evidence="1">2.7.7.8</ecNumber>
    </recommendedName>
    <alternativeName>
        <fullName evidence="1">Polynucleotide phosphorylase</fullName>
        <shortName evidence="1">PNPase</shortName>
    </alternativeName>
</protein>
<sequence length="761" mass="80920">MEGPEITFAEAMLDNGRFGARTVRFETGRIAQQAQGAVAAYLDEETMLLSATSASKHPKDNFDFFPLTVDVEERSYAAGKIPGSFFRREGRPSTEAILVCRLIDRPLRPSFVDGLRNEVQIVVTVLSIAPDEFYDALAINAASASTQISGLPFSGPIAGVRLALIPGNGAHEDQWVAFPKASQLEEAVFDLIVVGRVLTNEDGTEGDVAIMMVEAEATEGSWNLIQGGAVKPNEEVVAQGLEAAKPFIRQLVGAQAALAKQSAKAIADYPVFLPYSQETYDSVAALAYDELVNVYQIADKVERQNADDALKERVKAALAEKAQAGALDAEALTQFSAAYKSVSKVVMRGRVLREGVRIDGRGLTDIRPLDAEVQIIPRVHGSAVFQRGETQILGVTTLNMLKMEQQIDSLSPVTKKRYLHHYNFPPYSTGETGRVGSPKRREIGHGFLAERALVPVLPSREEFPYAIRQVSEALSSNGSTSMGSVCASTLSLLNAGVPLRAPVAGIAMGLISDVIDGETRYAALTDILGAEDALGDMDFKVAGTSEFVTAIQLDTKLDGIPSSVLASALKQAKDARTTILSVLDAAIDAPDEMAPTAPRVISVQIPVDKIGELIGPKGKTINAIQDETGADISIDEDGTVYIGAVDGPSAEAARAQVNVIANPTNPEVGEQFLGTVVKNAAFGAFVSLLPGKDGLLHISEVRKLAGGKRVESVDDVLSIGQKILVEITKIDDRGKLSLAPVLADEAETHGHDAASEGPTEG</sequence>
<feature type="chain" id="PRO_0000329696" description="Polyribonucleotide nucleotidyltransferase">
    <location>
        <begin position="1"/>
        <end position="761"/>
    </location>
</feature>
<feature type="domain" description="KH" evidence="1">
    <location>
        <begin position="598"/>
        <end position="657"/>
    </location>
</feature>
<feature type="domain" description="S1 motif" evidence="1">
    <location>
        <begin position="669"/>
        <end position="741"/>
    </location>
</feature>
<feature type="binding site" evidence="1">
    <location>
        <position position="532"/>
    </location>
    <ligand>
        <name>Mg(2+)</name>
        <dbReference type="ChEBI" id="CHEBI:18420"/>
    </ligand>
</feature>
<feature type="binding site" evidence="1">
    <location>
        <position position="538"/>
    </location>
    <ligand>
        <name>Mg(2+)</name>
        <dbReference type="ChEBI" id="CHEBI:18420"/>
    </ligand>
</feature>
<name>PNP_LEIXX</name>
<keyword id="KW-0963">Cytoplasm</keyword>
<keyword id="KW-0460">Magnesium</keyword>
<keyword id="KW-0479">Metal-binding</keyword>
<keyword id="KW-0548">Nucleotidyltransferase</keyword>
<keyword id="KW-1185">Reference proteome</keyword>
<keyword id="KW-0694">RNA-binding</keyword>
<keyword id="KW-0808">Transferase</keyword>
<evidence type="ECO:0000255" key="1">
    <source>
        <dbReference type="HAMAP-Rule" id="MF_01595"/>
    </source>
</evidence>
<reference key="1">
    <citation type="journal article" date="2004" name="Mol. Plant Microbe Interact.">
        <title>The genome sequence of the Gram-positive sugarcane pathogen Leifsonia xyli subsp. xyli.</title>
        <authorList>
            <person name="Monteiro-Vitorello C.B."/>
            <person name="Camargo L.E.A."/>
            <person name="Van Sluys M.A."/>
            <person name="Kitajima J.P."/>
            <person name="Truffi D."/>
            <person name="do Amaral A.M."/>
            <person name="Harakava R."/>
            <person name="de Oliveira J.C.F."/>
            <person name="Wood D."/>
            <person name="de Oliveira M.C."/>
            <person name="Miyaki C.Y."/>
            <person name="Takita M.A."/>
            <person name="da Silva A.C.R."/>
            <person name="Furlan L.R."/>
            <person name="Carraro D.M."/>
            <person name="Camarotte G."/>
            <person name="Almeida N.F. Jr."/>
            <person name="Carrer H."/>
            <person name="Coutinho L.L."/>
            <person name="El-Dorry H.A."/>
            <person name="Ferro M.I.T."/>
            <person name="Gagliardi P.R."/>
            <person name="Giglioti E."/>
            <person name="Goldman M.H.S."/>
            <person name="Goldman G.H."/>
            <person name="Kimura E.T."/>
            <person name="Ferro E.S."/>
            <person name="Kuramae E.E."/>
            <person name="Lemos E.G.M."/>
            <person name="Lemos M.V.F."/>
            <person name="Mauro S.M.Z."/>
            <person name="Machado M.A."/>
            <person name="Marino C.L."/>
            <person name="Menck C.F."/>
            <person name="Nunes L.R."/>
            <person name="Oliveira R.C."/>
            <person name="Pereira G.G."/>
            <person name="Siqueira W."/>
            <person name="de Souza A.A."/>
            <person name="Tsai S.M."/>
            <person name="Zanca A.S."/>
            <person name="Simpson A.J.G."/>
            <person name="Brumbley S.M."/>
            <person name="Setubal J.C."/>
        </authorList>
    </citation>
    <scope>NUCLEOTIDE SEQUENCE [LARGE SCALE GENOMIC DNA]</scope>
    <source>
        <strain>CTCB07</strain>
    </source>
</reference>
<dbReference type="EC" id="2.7.7.8" evidence="1"/>
<dbReference type="EMBL" id="AE016822">
    <property type="protein sequence ID" value="AAT88793.1"/>
    <property type="molecule type" value="Genomic_DNA"/>
</dbReference>
<dbReference type="RefSeq" id="WP_011185791.1">
    <property type="nucleotide sequence ID" value="NC_006087.1"/>
</dbReference>
<dbReference type="SMR" id="Q6AFQ2"/>
<dbReference type="STRING" id="281090.Lxx09030"/>
<dbReference type="KEGG" id="lxx:Lxx09030"/>
<dbReference type="eggNOG" id="COG1185">
    <property type="taxonomic scope" value="Bacteria"/>
</dbReference>
<dbReference type="HOGENOM" id="CLU_004217_2_2_11"/>
<dbReference type="Proteomes" id="UP000001306">
    <property type="component" value="Chromosome"/>
</dbReference>
<dbReference type="GO" id="GO:0005829">
    <property type="term" value="C:cytosol"/>
    <property type="evidence" value="ECO:0007669"/>
    <property type="project" value="TreeGrafter"/>
</dbReference>
<dbReference type="GO" id="GO:0000175">
    <property type="term" value="F:3'-5'-RNA exonuclease activity"/>
    <property type="evidence" value="ECO:0007669"/>
    <property type="project" value="TreeGrafter"/>
</dbReference>
<dbReference type="GO" id="GO:0000287">
    <property type="term" value="F:magnesium ion binding"/>
    <property type="evidence" value="ECO:0007669"/>
    <property type="project" value="UniProtKB-UniRule"/>
</dbReference>
<dbReference type="GO" id="GO:0004654">
    <property type="term" value="F:polyribonucleotide nucleotidyltransferase activity"/>
    <property type="evidence" value="ECO:0007669"/>
    <property type="project" value="UniProtKB-UniRule"/>
</dbReference>
<dbReference type="GO" id="GO:0003723">
    <property type="term" value="F:RNA binding"/>
    <property type="evidence" value="ECO:0007669"/>
    <property type="project" value="UniProtKB-UniRule"/>
</dbReference>
<dbReference type="GO" id="GO:0006402">
    <property type="term" value="P:mRNA catabolic process"/>
    <property type="evidence" value="ECO:0007669"/>
    <property type="project" value="UniProtKB-UniRule"/>
</dbReference>
<dbReference type="GO" id="GO:0006396">
    <property type="term" value="P:RNA processing"/>
    <property type="evidence" value="ECO:0007669"/>
    <property type="project" value="InterPro"/>
</dbReference>
<dbReference type="CDD" id="cd02393">
    <property type="entry name" value="KH-I_PNPase"/>
    <property type="match status" value="1"/>
</dbReference>
<dbReference type="CDD" id="cd11364">
    <property type="entry name" value="RNase_PH_PNPase_2"/>
    <property type="match status" value="1"/>
</dbReference>
<dbReference type="FunFam" id="2.40.50.140:FF:000069">
    <property type="entry name" value="Polyribonucleotide nucleotidyltransferase"/>
    <property type="match status" value="1"/>
</dbReference>
<dbReference type="FunFam" id="3.30.1370.10:FF:000001">
    <property type="entry name" value="Polyribonucleotide nucleotidyltransferase"/>
    <property type="match status" value="1"/>
</dbReference>
<dbReference type="FunFam" id="3.30.230.70:FF:000001">
    <property type="entry name" value="Polyribonucleotide nucleotidyltransferase"/>
    <property type="match status" value="1"/>
</dbReference>
<dbReference type="FunFam" id="3.30.230.70:FF:000002">
    <property type="entry name" value="Polyribonucleotide nucleotidyltransferase"/>
    <property type="match status" value="1"/>
</dbReference>
<dbReference type="Gene3D" id="3.30.230.70">
    <property type="entry name" value="GHMP Kinase, N-terminal domain"/>
    <property type="match status" value="2"/>
</dbReference>
<dbReference type="Gene3D" id="3.30.1370.10">
    <property type="entry name" value="K Homology domain, type 1"/>
    <property type="match status" value="1"/>
</dbReference>
<dbReference type="Gene3D" id="2.40.50.140">
    <property type="entry name" value="Nucleic acid-binding proteins"/>
    <property type="match status" value="1"/>
</dbReference>
<dbReference type="HAMAP" id="MF_01595">
    <property type="entry name" value="PNPase"/>
    <property type="match status" value="1"/>
</dbReference>
<dbReference type="InterPro" id="IPR001247">
    <property type="entry name" value="ExoRNase_PH_dom1"/>
</dbReference>
<dbReference type="InterPro" id="IPR036345">
    <property type="entry name" value="ExoRNase_PH_dom2_sf"/>
</dbReference>
<dbReference type="InterPro" id="IPR014069">
    <property type="entry name" value="GPSI/PNP"/>
</dbReference>
<dbReference type="InterPro" id="IPR004087">
    <property type="entry name" value="KH_dom"/>
</dbReference>
<dbReference type="InterPro" id="IPR004088">
    <property type="entry name" value="KH_dom_type_1"/>
</dbReference>
<dbReference type="InterPro" id="IPR036612">
    <property type="entry name" value="KH_dom_type_1_sf"/>
</dbReference>
<dbReference type="InterPro" id="IPR012340">
    <property type="entry name" value="NA-bd_OB-fold"/>
</dbReference>
<dbReference type="InterPro" id="IPR012162">
    <property type="entry name" value="PNPase"/>
</dbReference>
<dbReference type="InterPro" id="IPR027408">
    <property type="entry name" value="PNPase/RNase_PH_dom_sf"/>
</dbReference>
<dbReference type="InterPro" id="IPR015848">
    <property type="entry name" value="PNPase_PH_RNA-bd_bac/org-type"/>
</dbReference>
<dbReference type="InterPro" id="IPR036456">
    <property type="entry name" value="PNPase_PH_RNA-bd_sf"/>
</dbReference>
<dbReference type="InterPro" id="IPR020568">
    <property type="entry name" value="Ribosomal_Su5_D2-typ_SF"/>
</dbReference>
<dbReference type="InterPro" id="IPR003029">
    <property type="entry name" value="S1_domain"/>
</dbReference>
<dbReference type="NCBIfam" id="TIGR03591">
    <property type="entry name" value="polynuc_phos"/>
    <property type="match status" value="1"/>
</dbReference>
<dbReference type="NCBIfam" id="TIGR02696">
    <property type="entry name" value="pppGpp_PNP"/>
    <property type="match status" value="1"/>
</dbReference>
<dbReference type="NCBIfam" id="NF008805">
    <property type="entry name" value="PRK11824.1"/>
    <property type="match status" value="1"/>
</dbReference>
<dbReference type="PANTHER" id="PTHR11252">
    <property type="entry name" value="POLYRIBONUCLEOTIDE NUCLEOTIDYLTRANSFERASE"/>
    <property type="match status" value="1"/>
</dbReference>
<dbReference type="PANTHER" id="PTHR11252:SF0">
    <property type="entry name" value="POLYRIBONUCLEOTIDE NUCLEOTIDYLTRANSFERASE 1, MITOCHONDRIAL"/>
    <property type="match status" value="1"/>
</dbReference>
<dbReference type="Pfam" id="PF00013">
    <property type="entry name" value="KH_1"/>
    <property type="match status" value="1"/>
</dbReference>
<dbReference type="Pfam" id="PF03726">
    <property type="entry name" value="PNPase"/>
    <property type="match status" value="1"/>
</dbReference>
<dbReference type="Pfam" id="PF01138">
    <property type="entry name" value="RNase_PH"/>
    <property type="match status" value="2"/>
</dbReference>
<dbReference type="Pfam" id="PF00575">
    <property type="entry name" value="S1"/>
    <property type="match status" value="1"/>
</dbReference>
<dbReference type="PIRSF" id="PIRSF005499">
    <property type="entry name" value="PNPase"/>
    <property type="match status" value="1"/>
</dbReference>
<dbReference type="SMART" id="SM00322">
    <property type="entry name" value="KH"/>
    <property type="match status" value="1"/>
</dbReference>
<dbReference type="SMART" id="SM00316">
    <property type="entry name" value="S1"/>
    <property type="match status" value="1"/>
</dbReference>
<dbReference type="SUPFAM" id="SSF54791">
    <property type="entry name" value="Eukaryotic type KH-domain (KH-domain type I)"/>
    <property type="match status" value="1"/>
</dbReference>
<dbReference type="SUPFAM" id="SSF46915">
    <property type="entry name" value="Polynucleotide phosphorylase/guanosine pentaphosphate synthase (PNPase/GPSI), domain 3"/>
    <property type="match status" value="1"/>
</dbReference>
<dbReference type="SUPFAM" id="SSF55666">
    <property type="entry name" value="Ribonuclease PH domain 2-like"/>
    <property type="match status" value="2"/>
</dbReference>
<dbReference type="SUPFAM" id="SSF54211">
    <property type="entry name" value="Ribosomal protein S5 domain 2-like"/>
    <property type="match status" value="2"/>
</dbReference>
<dbReference type="PROSITE" id="PS50084">
    <property type="entry name" value="KH_TYPE_1"/>
    <property type="match status" value="1"/>
</dbReference>
<dbReference type="PROSITE" id="PS50126">
    <property type="entry name" value="S1"/>
    <property type="match status" value="1"/>
</dbReference>
<accession>Q6AFQ2</accession>
<proteinExistence type="inferred from homology"/>
<gene>
    <name evidence="1" type="primary">pnp</name>
    <name type="ordered locus">Lxx09030</name>
</gene>
<comment type="function">
    <text evidence="1">Involved in mRNA degradation. Catalyzes the phosphorolysis of single-stranded polyribonucleotides processively in the 3'- to 5'-direction.</text>
</comment>
<comment type="catalytic activity">
    <reaction evidence="1">
        <text>RNA(n+1) + phosphate = RNA(n) + a ribonucleoside 5'-diphosphate</text>
        <dbReference type="Rhea" id="RHEA:22096"/>
        <dbReference type="Rhea" id="RHEA-COMP:14527"/>
        <dbReference type="Rhea" id="RHEA-COMP:17342"/>
        <dbReference type="ChEBI" id="CHEBI:43474"/>
        <dbReference type="ChEBI" id="CHEBI:57930"/>
        <dbReference type="ChEBI" id="CHEBI:140395"/>
        <dbReference type="EC" id="2.7.7.8"/>
    </reaction>
</comment>
<comment type="cofactor">
    <cofactor evidence="1">
        <name>Mg(2+)</name>
        <dbReference type="ChEBI" id="CHEBI:18420"/>
    </cofactor>
</comment>
<comment type="subcellular location">
    <subcellularLocation>
        <location evidence="1">Cytoplasm</location>
    </subcellularLocation>
</comment>
<comment type="similarity">
    <text evidence="1">Belongs to the polyribonucleotide nucleotidyltransferase family.</text>
</comment>